<evidence type="ECO:0000250" key="1">
    <source>
        <dbReference type="UniProtKB" id="P02654"/>
    </source>
</evidence>
<evidence type="ECO:0000250" key="2">
    <source>
        <dbReference type="UniProtKB" id="P33047"/>
    </source>
</evidence>
<evidence type="ECO:0000250" key="3">
    <source>
        <dbReference type="UniProtKB" id="P34929"/>
    </source>
</evidence>
<evidence type="ECO:0000250" key="4">
    <source>
        <dbReference type="UniProtKB" id="P86336"/>
    </source>
</evidence>
<evidence type="ECO:0000255" key="5"/>
<evidence type="ECO:0000303" key="6">
    <source>
    </source>
</evidence>
<evidence type="ECO:0000305" key="7"/>
<dbReference type="EMBL" id="AC148222">
    <property type="status" value="NOT_ANNOTATED_CDS"/>
    <property type="molecule type" value="Genomic_DNA"/>
</dbReference>
<dbReference type="SMR" id="P0DKU8"/>
<dbReference type="GO" id="GO:0034364">
    <property type="term" value="C:high-density lipoprotein particle"/>
    <property type="evidence" value="ECO:0007669"/>
    <property type="project" value="TreeGrafter"/>
</dbReference>
<dbReference type="GO" id="GO:0034361">
    <property type="term" value="C:very-low-density lipoprotein particle"/>
    <property type="evidence" value="ECO:0007669"/>
    <property type="project" value="TreeGrafter"/>
</dbReference>
<dbReference type="GO" id="GO:0005504">
    <property type="term" value="F:fatty acid binding"/>
    <property type="evidence" value="ECO:0007669"/>
    <property type="project" value="TreeGrafter"/>
</dbReference>
<dbReference type="GO" id="GO:0004859">
    <property type="term" value="F:phospholipase inhibitor activity"/>
    <property type="evidence" value="ECO:0007669"/>
    <property type="project" value="TreeGrafter"/>
</dbReference>
<dbReference type="GO" id="GO:0006869">
    <property type="term" value="P:lipid transport"/>
    <property type="evidence" value="ECO:0007669"/>
    <property type="project" value="UniProtKB-KW"/>
</dbReference>
<dbReference type="GO" id="GO:0042157">
    <property type="term" value="P:lipoprotein metabolic process"/>
    <property type="evidence" value="ECO:0007669"/>
    <property type="project" value="InterPro"/>
</dbReference>
<dbReference type="GO" id="GO:0032375">
    <property type="term" value="P:negative regulation of cholesterol transport"/>
    <property type="evidence" value="ECO:0007669"/>
    <property type="project" value="TreeGrafter"/>
</dbReference>
<dbReference type="GO" id="GO:0050995">
    <property type="term" value="P:negative regulation of lipid catabolic process"/>
    <property type="evidence" value="ECO:0007669"/>
    <property type="project" value="TreeGrafter"/>
</dbReference>
<dbReference type="GO" id="GO:0010916">
    <property type="term" value="P:negative regulation of very-low-density lipoprotein particle clearance"/>
    <property type="evidence" value="ECO:0007669"/>
    <property type="project" value="TreeGrafter"/>
</dbReference>
<dbReference type="GO" id="GO:0006641">
    <property type="term" value="P:triglyceride metabolic process"/>
    <property type="evidence" value="ECO:0007669"/>
    <property type="project" value="TreeGrafter"/>
</dbReference>
<dbReference type="GO" id="GO:0034447">
    <property type="term" value="P:very-low-density lipoprotein particle clearance"/>
    <property type="evidence" value="ECO:0007669"/>
    <property type="project" value="TreeGrafter"/>
</dbReference>
<dbReference type="FunFam" id="4.10.260.30:FF:000001">
    <property type="entry name" value="Apolipoprotein C-I"/>
    <property type="match status" value="1"/>
</dbReference>
<dbReference type="Gene3D" id="4.10.260.30">
    <property type="entry name" value="Apolipoprotein C-I"/>
    <property type="match status" value="1"/>
</dbReference>
<dbReference type="InterPro" id="IPR043081">
    <property type="entry name" value="ApoC-1_sf"/>
</dbReference>
<dbReference type="InterPro" id="IPR006781">
    <property type="entry name" value="ApoC-I"/>
</dbReference>
<dbReference type="PANTHER" id="PTHR16565">
    <property type="entry name" value="APOLIPOPROTEIN C-I"/>
    <property type="match status" value="1"/>
</dbReference>
<dbReference type="PANTHER" id="PTHR16565:SF2">
    <property type="entry name" value="APOLIPOPROTEIN C-I"/>
    <property type="match status" value="1"/>
</dbReference>
<dbReference type="Pfam" id="PF04691">
    <property type="entry name" value="ApoC-I"/>
    <property type="match status" value="1"/>
</dbReference>
<accession>P0DKU8</accession>
<comment type="function">
    <text evidence="1 2">Inhibitor of lipoprotein binding to the low density lipoprotein (LDL) receptor, LDL receptor-related protein, and very low density lipoprotein (VLDL) receptor. Associates with high density lipoproteins (HDL) and the triacylglycerol-rich lipoproteins in the plasma and makes up about 10% of the protein of the VLDL and 2% of that of HDL. Appears to interfere directly with fatty acid uptake and is also the major plasma inhibitor of cholesteryl ester transfer protein (CETP). Binds free fatty acids and reduces their intracellular esterification. Modulates the interaction of APOE with beta-migrating VLDL and inhibits binding of beta-VLDL to the LDL receptor-related protein.</text>
</comment>
<comment type="subcellular location">
    <subcellularLocation>
        <location evidence="1">Secreted</location>
    </subcellularLocation>
</comment>
<comment type="miscellaneous">
    <text evidence="6">Apolipoprotein C-I is present in acidic (APOC1A) and basic (APOC1B) forms in P.paniscus, P.abelii and P.troglodytes and perhaps also in baboons and macaques. The two genes for ApoC-I arose through a duplication process that occurred after the divergence of New World monkeys from the human lineage. In human, the acidic form has become a pseudogene sometime between the divergence of bonobos and chimpanzees from the human lineage and the appearance of the Denisovans. Pseudogenization resulted when the codon for the penultimate amino acid in the signal sequence was changed to a stop codon.</text>
</comment>
<comment type="similarity">
    <text evidence="7">Belongs to the apolipoprotein C1 family.</text>
</comment>
<name>APO1B_COLGU</name>
<protein>
    <recommendedName>
        <fullName>Apolipoprotein C-I, basic form</fullName>
        <shortName>Apo-CIB</shortName>
        <shortName>ApoC-IB</shortName>
    </recommendedName>
    <alternativeName>
        <fullName>Apolipoprotein C1B</fullName>
    </alternativeName>
    <component>
        <recommendedName>
            <fullName>Cholesteryl ester transfer inhibitor protein</fullName>
            <shortName>CETIP</shortName>
        </recommendedName>
    </component>
    <component>
        <recommendedName>
            <fullName>Truncated apolipoprotein C-I, basic form</fullName>
            <shortName>Apo-CIB'</shortName>
            <shortName>ApoC-IB'</shortName>
        </recommendedName>
    </component>
</protein>
<keyword id="KW-0445">Lipid transport</keyword>
<keyword id="KW-0964">Secreted</keyword>
<keyword id="KW-0732">Signal</keyword>
<keyword id="KW-0813">Transport</keyword>
<reference key="1">
    <citation type="submission" date="2006-07" db="EMBL/GenBank/DDBJ databases">
        <authorList>
            <person name="Cheng J.-F."/>
            <person name="Hamilton M."/>
            <person name="Peng Y."/>
            <person name="Hosseini R."/>
            <person name="Peng Z."/>
            <person name="Malinov I."/>
            <person name="Rubin E.M."/>
        </authorList>
    </citation>
    <scope>NUCLEOTIDE SEQUENCE [LARGE SCALE GENOMIC DNA]</scope>
</reference>
<reference key="2">
    <citation type="unpublished observations" date="2012-11">
        <authorList>
            <person name="Puppione D.L."/>
        </authorList>
    </citation>
    <scope>IDENTIFICATION</scope>
</reference>
<reference key="3">
    <citation type="journal article" date="2013" name="Front. Biol.">
        <title>Proteogenomic Review of the Changes in Primate apoC-I during Evolution.</title>
        <authorList>
            <person name="Puppione D."/>
            <person name="Whitelegge J.P."/>
        </authorList>
    </citation>
    <scope>REVIEW</scope>
</reference>
<reference key="4">
    <citation type="journal article" date="2014" name="Comp. Biochem. Physiol.">
        <title>Higher primates, but not New World monkeys, have a duplicate set of enhancers flanking their apoC-I genes.</title>
        <authorList>
            <person name="Puppione D.L."/>
        </authorList>
    </citation>
    <scope>GENE DUPLICATION</scope>
</reference>
<feature type="signal peptide" evidence="5">
    <location>
        <begin position="1"/>
        <end position="26"/>
    </location>
</feature>
<feature type="chain" id="PRO_0000420901" description="Apolipoprotein C-I, basic form">
    <location>
        <begin position="27"/>
        <end position="83"/>
    </location>
</feature>
<feature type="chain" id="PRO_0000436801" description="Cholesteryl ester transfer inhibitor protein" evidence="3">
    <location>
        <begin position="27"/>
        <end position="64"/>
    </location>
</feature>
<feature type="chain" id="PRO_0000420902" description="Truncated apolipoprotein C-I, basic form" evidence="4">
    <location>
        <begin position="29"/>
        <end position="83"/>
    </location>
</feature>
<gene>
    <name type="primary">APOC1B</name>
</gene>
<organism>
    <name type="scientific">Colobus guereza</name>
    <name type="common">Mantled guereza</name>
    <name type="synonym">Eastern black-and-white colobus monkey</name>
    <dbReference type="NCBI Taxonomy" id="33548"/>
    <lineage>
        <taxon>Eukaryota</taxon>
        <taxon>Metazoa</taxon>
        <taxon>Chordata</taxon>
        <taxon>Craniata</taxon>
        <taxon>Vertebrata</taxon>
        <taxon>Euteleostomi</taxon>
        <taxon>Mammalia</taxon>
        <taxon>Eutheria</taxon>
        <taxon>Euarchontoglires</taxon>
        <taxon>Primates</taxon>
        <taxon>Haplorrhini</taxon>
        <taxon>Catarrhini</taxon>
        <taxon>Cercopithecidae</taxon>
        <taxon>Colobinae</taxon>
        <taxon>Colobus</taxon>
    </lineage>
</organism>
<proteinExistence type="inferred from homology"/>
<sequence length="83" mass="9360">MRLFLSLPVLVVVLSMVLEGPAPAQGAPDVSSALDKLKEFGNTLEDKAREVINRIKQSEFPAKTRDWFSETFRKVKEKLKINS</sequence>